<feature type="chain" id="PRO_0000331776" description="Methionine--tRNA ligase">
    <location>
        <begin position="1"/>
        <end position="686"/>
    </location>
</feature>
<feature type="domain" description="tRNA-binding" evidence="1">
    <location>
        <begin position="584"/>
        <end position="686"/>
    </location>
</feature>
<feature type="region of interest" description="Disordered" evidence="2">
    <location>
        <begin position="547"/>
        <end position="573"/>
    </location>
</feature>
<feature type="short sequence motif" description="'HIGH' region">
    <location>
        <begin position="22"/>
        <end position="32"/>
    </location>
</feature>
<feature type="short sequence motif" description="'KMSKS' region">
    <location>
        <begin position="337"/>
        <end position="341"/>
    </location>
</feature>
<feature type="binding site" evidence="1">
    <location>
        <position position="153"/>
    </location>
    <ligand>
        <name>Zn(2+)</name>
        <dbReference type="ChEBI" id="CHEBI:29105"/>
    </ligand>
</feature>
<feature type="binding site" evidence="1">
    <location>
        <position position="156"/>
    </location>
    <ligand>
        <name>Zn(2+)</name>
        <dbReference type="ChEBI" id="CHEBI:29105"/>
    </ligand>
</feature>
<feature type="binding site" evidence="1">
    <location>
        <position position="166"/>
    </location>
    <ligand>
        <name>Zn(2+)</name>
        <dbReference type="ChEBI" id="CHEBI:29105"/>
    </ligand>
</feature>
<feature type="binding site" evidence="1">
    <location>
        <position position="169"/>
    </location>
    <ligand>
        <name>Zn(2+)</name>
        <dbReference type="ChEBI" id="CHEBI:29105"/>
    </ligand>
</feature>
<feature type="binding site" evidence="1">
    <location>
        <position position="340"/>
    </location>
    <ligand>
        <name>ATP</name>
        <dbReference type="ChEBI" id="CHEBI:30616"/>
    </ligand>
</feature>
<name>SYM_ALCBS</name>
<accession>Q0VP51</accession>
<evidence type="ECO:0000255" key="1">
    <source>
        <dbReference type="HAMAP-Rule" id="MF_00098"/>
    </source>
</evidence>
<evidence type="ECO:0000256" key="2">
    <source>
        <dbReference type="SAM" id="MobiDB-lite"/>
    </source>
</evidence>
<keyword id="KW-0030">Aminoacyl-tRNA synthetase</keyword>
<keyword id="KW-0067">ATP-binding</keyword>
<keyword id="KW-0963">Cytoplasm</keyword>
<keyword id="KW-0436">Ligase</keyword>
<keyword id="KW-0479">Metal-binding</keyword>
<keyword id="KW-0547">Nucleotide-binding</keyword>
<keyword id="KW-0648">Protein biosynthesis</keyword>
<keyword id="KW-1185">Reference proteome</keyword>
<keyword id="KW-0694">RNA-binding</keyword>
<keyword id="KW-0820">tRNA-binding</keyword>
<keyword id="KW-0862">Zinc</keyword>
<sequence>MEIDAVPMSDTPRKILVTSALPYANGPIHLGHLLEYIQTDIWVRFQKLRGQQCIYVCADDAHGTAIMLKAEENGVTPEQQIAQVKADHERDFADFQVNFDNYYSTHSPENRALSEMVFQRNKDAGYILEKTITQLYDPQKGMFLADRFVKGTCPKCKSEDQYGDNCEVCGATYTPAELIEPYSSVSGATPVEKETTQLFFDLPKFEALLREWTRSGALQEQVANKLQEWIEDLQPWDISREAPYFGFEIPGYPGKYFYVWLDAPIGYMASFQNYCDREGLSFDDYWGKESTAELYHFIGKDIINFHGLFWPAMLDGAGLRKPTAIYSHGFVTVNGAKMSKSRGTFIKARTYLDHLSPEYLRYYFAAKLSSRVDDFDLNLEDFAQRVNSDLVGKLVNIASRTGNFVKKFGGTLSTELDNMMLVREVQEAGPRIADFYEKREFGKAMREIMALADHANVYIADKAPWSLSKEEGKEQEVLAICSTAINVFRLLVIYLKPVLPALAERAEAFMQVEPLTWADSEQLLLGHEIAKFKPLLSRVDMAQVESMLEDSKESTPAPAAAKPKKAATQKADAADNDETISIDDFLKVKLRVARVAKAAHVDGADKLLQLTLDVGELGQRNVFAGIKARYAPEELEGKLVVLVANLAPRKMKFGISEGMVLAAGPGGDDIHILSPDSGAEPGMEVR</sequence>
<protein>
    <recommendedName>
        <fullName evidence="1">Methionine--tRNA ligase</fullName>
        <ecNumber evidence="1">6.1.1.10</ecNumber>
    </recommendedName>
    <alternativeName>
        <fullName evidence="1">Methionyl-tRNA synthetase</fullName>
        <shortName evidence="1">MetRS</shortName>
    </alternativeName>
</protein>
<reference key="1">
    <citation type="journal article" date="2006" name="Nat. Biotechnol.">
        <title>Genome sequence of the ubiquitous hydrocarbon-degrading marine bacterium Alcanivorax borkumensis.</title>
        <authorList>
            <person name="Schneiker S."/>
            <person name="Martins dos Santos V.A.P."/>
            <person name="Bartels D."/>
            <person name="Bekel T."/>
            <person name="Brecht M."/>
            <person name="Buhrmester J."/>
            <person name="Chernikova T.N."/>
            <person name="Denaro R."/>
            <person name="Ferrer M."/>
            <person name="Gertler C."/>
            <person name="Goesmann A."/>
            <person name="Golyshina O.V."/>
            <person name="Kaminski F."/>
            <person name="Khachane A.N."/>
            <person name="Lang S."/>
            <person name="Linke B."/>
            <person name="McHardy A.C."/>
            <person name="Meyer F."/>
            <person name="Nechitaylo T."/>
            <person name="Puehler A."/>
            <person name="Regenhardt D."/>
            <person name="Rupp O."/>
            <person name="Sabirova J.S."/>
            <person name="Selbitschka W."/>
            <person name="Yakimov M.M."/>
            <person name="Timmis K.N."/>
            <person name="Vorhoelter F.-J."/>
            <person name="Weidner S."/>
            <person name="Kaiser O."/>
            <person name="Golyshin P.N."/>
        </authorList>
    </citation>
    <scope>NUCLEOTIDE SEQUENCE [LARGE SCALE GENOMIC DNA]</scope>
    <source>
        <strain>ATCC 700651 / DSM 11573 / NCIMB 13689 / SK2</strain>
    </source>
</reference>
<comment type="function">
    <text evidence="1">Is required not only for elongation of protein synthesis but also for the initiation of all mRNA translation through initiator tRNA(fMet) aminoacylation.</text>
</comment>
<comment type="catalytic activity">
    <reaction evidence="1">
        <text>tRNA(Met) + L-methionine + ATP = L-methionyl-tRNA(Met) + AMP + diphosphate</text>
        <dbReference type="Rhea" id="RHEA:13481"/>
        <dbReference type="Rhea" id="RHEA-COMP:9667"/>
        <dbReference type="Rhea" id="RHEA-COMP:9698"/>
        <dbReference type="ChEBI" id="CHEBI:30616"/>
        <dbReference type="ChEBI" id="CHEBI:33019"/>
        <dbReference type="ChEBI" id="CHEBI:57844"/>
        <dbReference type="ChEBI" id="CHEBI:78442"/>
        <dbReference type="ChEBI" id="CHEBI:78530"/>
        <dbReference type="ChEBI" id="CHEBI:456215"/>
        <dbReference type="EC" id="6.1.1.10"/>
    </reaction>
</comment>
<comment type="cofactor">
    <cofactor evidence="1">
        <name>Zn(2+)</name>
        <dbReference type="ChEBI" id="CHEBI:29105"/>
    </cofactor>
    <text evidence="1">Binds 1 zinc ion per subunit.</text>
</comment>
<comment type="subunit">
    <text evidence="1">Homodimer.</text>
</comment>
<comment type="subcellular location">
    <subcellularLocation>
        <location evidence="1">Cytoplasm</location>
    </subcellularLocation>
</comment>
<comment type="similarity">
    <text evidence="1">Belongs to the class-I aminoacyl-tRNA synthetase family. MetG type 1 subfamily.</text>
</comment>
<organism>
    <name type="scientific">Alcanivorax borkumensis (strain ATCC 700651 / DSM 11573 / NCIMB 13689 / SK2)</name>
    <dbReference type="NCBI Taxonomy" id="393595"/>
    <lineage>
        <taxon>Bacteria</taxon>
        <taxon>Pseudomonadati</taxon>
        <taxon>Pseudomonadota</taxon>
        <taxon>Gammaproteobacteria</taxon>
        <taxon>Oceanospirillales</taxon>
        <taxon>Alcanivoracaceae</taxon>
        <taxon>Alcanivorax</taxon>
    </lineage>
</organism>
<gene>
    <name evidence="1" type="primary">metG</name>
    <name type="ordered locus">ABO_1599</name>
</gene>
<dbReference type="EC" id="6.1.1.10" evidence="1"/>
<dbReference type="EMBL" id="AM286690">
    <property type="protein sequence ID" value="CAL17047.1"/>
    <property type="molecule type" value="Genomic_DNA"/>
</dbReference>
<dbReference type="SMR" id="Q0VP51"/>
<dbReference type="STRING" id="393595.ABO_1599"/>
<dbReference type="KEGG" id="abo:ABO_1599"/>
<dbReference type="eggNOG" id="COG0073">
    <property type="taxonomic scope" value="Bacteria"/>
</dbReference>
<dbReference type="eggNOG" id="COG0143">
    <property type="taxonomic scope" value="Bacteria"/>
</dbReference>
<dbReference type="HOGENOM" id="CLU_009710_7_0_6"/>
<dbReference type="Proteomes" id="UP000008871">
    <property type="component" value="Chromosome"/>
</dbReference>
<dbReference type="GO" id="GO:0005829">
    <property type="term" value="C:cytosol"/>
    <property type="evidence" value="ECO:0007669"/>
    <property type="project" value="TreeGrafter"/>
</dbReference>
<dbReference type="GO" id="GO:0005524">
    <property type="term" value="F:ATP binding"/>
    <property type="evidence" value="ECO:0007669"/>
    <property type="project" value="UniProtKB-UniRule"/>
</dbReference>
<dbReference type="GO" id="GO:0046872">
    <property type="term" value="F:metal ion binding"/>
    <property type="evidence" value="ECO:0007669"/>
    <property type="project" value="UniProtKB-KW"/>
</dbReference>
<dbReference type="GO" id="GO:0004825">
    <property type="term" value="F:methionine-tRNA ligase activity"/>
    <property type="evidence" value="ECO:0007669"/>
    <property type="project" value="UniProtKB-UniRule"/>
</dbReference>
<dbReference type="GO" id="GO:0000049">
    <property type="term" value="F:tRNA binding"/>
    <property type="evidence" value="ECO:0007669"/>
    <property type="project" value="UniProtKB-KW"/>
</dbReference>
<dbReference type="GO" id="GO:0006431">
    <property type="term" value="P:methionyl-tRNA aminoacylation"/>
    <property type="evidence" value="ECO:0007669"/>
    <property type="project" value="UniProtKB-UniRule"/>
</dbReference>
<dbReference type="CDD" id="cd07957">
    <property type="entry name" value="Anticodon_Ia_Met"/>
    <property type="match status" value="1"/>
</dbReference>
<dbReference type="CDD" id="cd00814">
    <property type="entry name" value="MetRS_core"/>
    <property type="match status" value="1"/>
</dbReference>
<dbReference type="CDD" id="cd02800">
    <property type="entry name" value="tRNA_bind_EcMetRS_like"/>
    <property type="match status" value="1"/>
</dbReference>
<dbReference type="FunFam" id="1.10.730.10:FF:000005">
    <property type="entry name" value="Methionine--tRNA ligase"/>
    <property type="match status" value="1"/>
</dbReference>
<dbReference type="FunFam" id="2.20.28.20:FF:000001">
    <property type="entry name" value="Methionine--tRNA ligase"/>
    <property type="match status" value="1"/>
</dbReference>
<dbReference type="FunFam" id="2.40.50.140:FF:000042">
    <property type="entry name" value="Methionine--tRNA ligase"/>
    <property type="match status" value="1"/>
</dbReference>
<dbReference type="Gene3D" id="3.40.50.620">
    <property type="entry name" value="HUPs"/>
    <property type="match status" value="1"/>
</dbReference>
<dbReference type="Gene3D" id="1.10.730.10">
    <property type="entry name" value="Isoleucyl-tRNA Synthetase, Domain 1"/>
    <property type="match status" value="1"/>
</dbReference>
<dbReference type="Gene3D" id="2.20.28.20">
    <property type="entry name" value="Methionyl-tRNA synthetase, Zn-domain"/>
    <property type="match status" value="1"/>
</dbReference>
<dbReference type="Gene3D" id="2.40.50.140">
    <property type="entry name" value="Nucleic acid-binding proteins"/>
    <property type="match status" value="1"/>
</dbReference>
<dbReference type="HAMAP" id="MF_00098">
    <property type="entry name" value="Met_tRNA_synth_type1"/>
    <property type="match status" value="1"/>
</dbReference>
<dbReference type="InterPro" id="IPR001412">
    <property type="entry name" value="aa-tRNA-synth_I_CS"/>
</dbReference>
<dbReference type="InterPro" id="IPR041872">
    <property type="entry name" value="Anticodon_Met"/>
</dbReference>
<dbReference type="InterPro" id="IPR004495">
    <property type="entry name" value="Met-tRNA-synth_bsu_C"/>
</dbReference>
<dbReference type="InterPro" id="IPR023458">
    <property type="entry name" value="Met-tRNA_ligase_1"/>
</dbReference>
<dbReference type="InterPro" id="IPR014758">
    <property type="entry name" value="Met-tRNA_synth"/>
</dbReference>
<dbReference type="InterPro" id="IPR015413">
    <property type="entry name" value="Methionyl/Leucyl_tRNA_Synth"/>
</dbReference>
<dbReference type="InterPro" id="IPR033911">
    <property type="entry name" value="MetRS_core"/>
</dbReference>
<dbReference type="InterPro" id="IPR029038">
    <property type="entry name" value="MetRS_Zn"/>
</dbReference>
<dbReference type="InterPro" id="IPR012340">
    <property type="entry name" value="NA-bd_OB-fold"/>
</dbReference>
<dbReference type="InterPro" id="IPR014729">
    <property type="entry name" value="Rossmann-like_a/b/a_fold"/>
</dbReference>
<dbReference type="InterPro" id="IPR002547">
    <property type="entry name" value="tRNA-bd_dom"/>
</dbReference>
<dbReference type="InterPro" id="IPR009080">
    <property type="entry name" value="tRNAsynth_Ia_anticodon-bd"/>
</dbReference>
<dbReference type="NCBIfam" id="TIGR00398">
    <property type="entry name" value="metG"/>
    <property type="match status" value="1"/>
</dbReference>
<dbReference type="NCBIfam" id="TIGR00399">
    <property type="entry name" value="metG_C_term"/>
    <property type="match status" value="1"/>
</dbReference>
<dbReference type="NCBIfam" id="NF001100">
    <property type="entry name" value="PRK00133.1"/>
    <property type="match status" value="1"/>
</dbReference>
<dbReference type="PANTHER" id="PTHR45765">
    <property type="entry name" value="METHIONINE--TRNA LIGASE"/>
    <property type="match status" value="1"/>
</dbReference>
<dbReference type="PANTHER" id="PTHR45765:SF1">
    <property type="entry name" value="METHIONINE--TRNA LIGASE, CYTOPLASMIC"/>
    <property type="match status" value="1"/>
</dbReference>
<dbReference type="Pfam" id="PF19303">
    <property type="entry name" value="Anticodon_3"/>
    <property type="match status" value="1"/>
</dbReference>
<dbReference type="Pfam" id="PF09334">
    <property type="entry name" value="tRNA-synt_1g"/>
    <property type="match status" value="1"/>
</dbReference>
<dbReference type="Pfam" id="PF01588">
    <property type="entry name" value="tRNA_bind"/>
    <property type="match status" value="1"/>
</dbReference>
<dbReference type="PRINTS" id="PR01041">
    <property type="entry name" value="TRNASYNTHMET"/>
</dbReference>
<dbReference type="SUPFAM" id="SSF47323">
    <property type="entry name" value="Anticodon-binding domain of a subclass of class I aminoacyl-tRNA synthetases"/>
    <property type="match status" value="1"/>
</dbReference>
<dbReference type="SUPFAM" id="SSF57770">
    <property type="entry name" value="Methionyl-tRNA synthetase (MetRS), Zn-domain"/>
    <property type="match status" value="1"/>
</dbReference>
<dbReference type="SUPFAM" id="SSF50249">
    <property type="entry name" value="Nucleic acid-binding proteins"/>
    <property type="match status" value="1"/>
</dbReference>
<dbReference type="SUPFAM" id="SSF52374">
    <property type="entry name" value="Nucleotidylyl transferase"/>
    <property type="match status" value="1"/>
</dbReference>
<dbReference type="PROSITE" id="PS00178">
    <property type="entry name" value="AA_TRNA_LIGASE_I"/>
    <property type="match status" value="1"/>
</dbReference>
<dbReference type="PROSITE" id="PS50886">
    <property type="entry name" value="TRBD"/>
    <property type="match status" value="1"/>
</dbReference>
<proteinExistence type="inferred from homology"/>